<dbReference type="EMBL" id="AF175204">
    <property type="protein sequence ID" value="AAG09198.1"/>
    <property type="molecule type" value="mRNA"/>
</dbReference>
<dbReference type="EMBL" id="BC064706">
    <property type="protein sequence ID" value="AAH64706.1"/>
    <property type="molecule type" value="mRNA"/>
</dbReference>
<dbReference type="RefSeq" id="NP_991284.1">
    <property type="nucleotide sequence ID" value="NM_205721.1"/>
</dbReference>
<dbReference type="SMR" id="Q6P268"/>
<dbReference type="FunCoup" id="Q6P268">
    <property type="interactions" value="1974"/>
</dbReference>
<dbReference type="STRING" id="7955.ENSDARP00000135403"/>
<dbReference type="GeneID" id="403034"/>
<dbReference type="KEGG" id="dre:403034"/>
<dbReference type="AGR" id="ZFIN:ZDB-GENE-040322-1"/>
<dbReference type="CTD" id="79031"/>
<dbReference type="ZFIN" id="ZDB-GENE-040322-1">
    <property type="gene designation" value="pdcl3"/>
</dbReference>
<dbReference type="InParanoid" id="Q6P268"/>
<dbReference type="OrthoDB" id="45518at2759"/>
<dbReference type="PhylomeDB" id="Q6P268"/>
<dbReference type="PRO" id="PR:Q6P268"/>
<dbReference type="Proteomes" id="UP000000437">
    <property type="component" value="Unplaced"/>
</dbReference>
<dbReference type="GO" id="GO:0005737">
    <property type="term" value="C:cytoplasm"/>
    <property type="evidence" value="ECO:0000250"/>
    <property type="project" value="UniProtKB"/>
</dbReference>
<dbReference type="GO" id="GO:0005783">
    <property type="term" value="C:endoplasmic reticulum"/>
    <property type="evidence" value="ECO:0007669"/>
    <property type="project" value="UniProtKB-SubCell"/>
</dbReference>
<dbReference type="GO" id="GO:0048471">
    <property type="term" value="C:perinuclear region of cytoplasm"/>
    <property type="evidence" value="ECO:0007669"/>
    <property type="project" value="UniProtKB-SubCell"/>
</dbReference>
<dbReference type="GO" id="GO:0044183">
    <property type="term" value="F:protein folding chaperone"/>
    <property type="evidence" value="ECO:0000318"/>
    <property type="project" value="GO_Central"/>
</dbReference>
<dbReference type="GO" id="GO:0043184">
    <property type="term" value="F:vascular endothelial growth factor receptor 2 binding"/>
    <property type="evidence" value="ECO:0000318"/>
    <property type="project" value="GO_Central"/>
</dbReference>
<dbReference type="GO" id="GO:0001525">
    <property type="term" value="P:angiogenesis"/>
    <property type="evidence" value="ECO:0000315"/>
    <property type="project" value="ZFIN"/>
</dbReference>
<dbReference type="GO" id="GO:0006915">
    <property type="term" value="P:apoptotic process"/>
    <property type="evidence" value="ECO:0007669"/>
    <property type="project" value="UniProtKB-KW"/>
</dbReference>
<dbReference type="GO" id="GO:0010628">
    <property type="term" value="P:positive regulation of gene expression"/>
    <property type="evidence" value="ECO:0000315"/>
    <property type="project" value="UniProtKB"/>
</dbReference>
<dbReference type="GO" id="GO:0006457">
    <property type="term" value="P:protein folding"/>
    <property type="evidence" value="ECO:0000318"/>
    <property type="project" value="GO_Central"/>
</dbReference>
<dbReference type="CDD" id="cd02988">
    <property type="entry name" value="Phd_like_VIAF"/>
    <property type="match status" value="1"/>
</dbReference>
<dbReference type="Gene3D" id="3.40.30.10">
    <property type="entry name" value="Glutaredoxin"/>
    <property type="match status" value="1"/>
</dbReference>
<dbReference type="InterPro" id="IPR051498">
    <property type="entry name" value="Phosducin-like_chap/apop_reg"/>
</dbReference>
<dbReference type="InterPro" id="IPR024253">
    <property type="entry name" value="Phosducin_thioredoxin-like_dom"/>
</dbReference>
<dbReference type="InterPro" id="IPR036249">
    <property type="entry name" value="Thioredoxin-like_sf"/>
</dbReference>
<dbReference type="PANTHER" id="PTHR45809:SF4">
    <property type="entry name" value="PHOSDUCIN-LIKE PROTEIN 3"/>
    <property type="match status" value="1"/>
</dbReference>
<dbReference type="PANTHER" id="PTHR45809">
    <property type="entry name" value="VIRAL IAP-ASSOCIATED FACTOR HOMOLOG"/>
    <property type="match status" value="1"/>
</dbReference>
<dbReference type="Pfam" id="PF02114">
    <property type="entry name" value="Phosducin"/>
    <property type="match status" value="1"/>
</dbReference>
<dbReference type="SUPFAM" id="SSF52833">
    <property type="entry name" value="Thioredoxin-like"/>
    <property type="match status" value="1"/>
</dbReference>
<gene>
    <name evidence="9" type="primary">pdcl3</name>
    <name evidence="8" type="synonym">viaf1</name>
</gene>
<name>PDCL3_DANRE</name>
<comment type="function">
    <text evidence="2 3 6">Acts as a chaperone for the angiogenic VEGF receptor KDR/VEGFR2, increasing its abundance by inhibiting its ubiquitination and degradation (PubMed:26059764). Inhibits the folding activity of the chaperonin-containing T-complex (CCT) which leads to inhibition of cytoskeletal actin folding (By similarity). Acts as a chaperone during heat shock alongside HSP90 and HSP40/70 chaperone complexes (By similarity). Modulates the activation of caspases during apoptosis (By similarity).</text>
</comment>
<comment type="subunit">
    <text evidence="3">Interacts (via thioredoxin fold region) with kdr/vegfr2 (via juxtamembrane domain).</text>
</comment>
<comment type="subcellular location">
    <subcellularLocation>
        <location evidence="3">Cytoplasm</location>
    </subcellularLocation>
    <subcellularLocation>
        <location evidence="3">Cytoplasm</location>
        <location evidence="3">Perinuclear region</location>
    </subcellularLocation>
    <subcellularLocation>
        <location evidence="3">Endoplasmic reticulum</location>
    </subcellularLocation>
</comment>
<comment type="tissue specificity">
    <text evidence="6">Expressed in endothelial cells.</text>
</comment>
<comment type="disruption phenotype">
    <text evidence="6">Morpholino knockdown of the protein causes significant inhibition of angiogenesis.</text>
</comment>
<comment type="similarity">
    <text evidence="4">Belongs to the phosducin family.</text>
</comment>
<organism>
    <name type="scientific">Danio rerio</name>
    <name type="common">Zebrafish</name>
    <name type="synonym">Brachydanio rerio</name>
    <dbReference type="NCBI Taxonomy" id="7955"/>
    <lineage>
        <taxon>Eukaryota</taxon>
        <taxon>Metazoa</taxon>
        <taxon>Chordata</taxon>
        <taxon>Craniata</taxon>
        <taxon>Vertebrata</taxon>
        <taxon>Euteleostomi</taxon>
        <taxon>Actinopterygii</taxon>
        <taxon>Neopterygii</taxon>
        <taxon>Teleostei</taxon>
        <taxon>Ostariophysi</taxon>
        <taxon>Cypriniformes</taxon>
        <taxon>Danionidae</taxon>
        <taxon>Danioninae</taxon>
        <taxon>Danio</taxon>
    </lineage>
</organism>
<accession>Q6P268</accession>
<accession>Q800E3</accession>
<sequence length="239" mass="27657">MQDPNADTEWNDILRKKGILPPKETPVEEEEDEQLHLQSQSVVKTYEDMTLEELEENEDEFSEEDEHAMEMYRLKRLAEWKANQMKNVFGELKEISGQDYVQEVNKAGEGIWVVLHLYKQGIPLCSLINQHLAQLARKFPQSKFLKSISSTCIPNYPDRNLPTLFVYRDGEMKAQFIGPLVFGGMNLTCDELEWRLSESGAVKTDLEENPRKQIQDQLMTSIRCSANTHRDGEEDSDED</sequence>
<protein>
    <recommendedName>
        <fullName>Phosducin-like protein 3</fullName>
    </recommendedName>
    <alternativeName>
        <fullName>Viral IAP-associated factor 1 homolog</fullName>
    </alternativeName>
</protein>
<keyword id="KW-0037">Angiogenesis</keyword>
<keyword id="KW-0053">Apoptosis</keyword>
<keyword id="KW-0143">Chaperone</keyword>
<keyword id="KW-0963">Cytoplasm</keyword>
<keyword id="KW-0256">Endoplasmic reticulum</keyword>
<keyword id="KW-0597">Phosphoprotein</keyword>
<keyword id="KW-1185">Reference proteome</keyword>
<feature type="chain" id="PRO_0000163760" description="Phosducin-like protein 3">
    <location>
        <begin position="1"/>
        <end position="239"/>
    </location>
</feature>
<feature type="domain" description="Phosducin" evidence="4">
    <location>
        <begin position="28"/>
        <end position="201"/>
    </location>
</feature>
<feature type="region of interest" description="Disordered" evidence="5">
    <location>
        <begin position="16"/>
        <end position="37"/>
    </location>
</feature>
<feature type="region of interest" description="Thioredoxin fold" evidence="1">
    <location>
        <begin position="89"/>
        <end position="239"/>
    </location>
</feature>
<feature type="region of interest" description="Disordered" evidence="5">
    <location>
        <begin position="217"/>
        <end position="239"/>
    </location>
</feature>
<feature type="compositionally biased region" description="Polar residues" evidence="5">
    <location>
        <begin position="217"/>
        <end position="227"/>
    </location>
</feature>
<feature type="modified residue" description="Phosphoserine" evidence="3">
    <location>
        <position position="41"/>
    </location>
</feature>
<feature type="sequence conflict" description="In Ref. 1; AAG09198." evidence="7" ref="1">
    <original>L</original>
    <variation>Q</variation>
    <location>
        <position position="74"/>
    </location>
</feature>
<evidence type="ECO:0000250" key="1"/>
<evidence type="ECO:0000250" key="2">
    <source>
        <dbReference type="UniProtKB" id="Q4KLJ8"/>
    </source>
</evidence>
<evidence type="ECO:0000250" key="3">
    <source>
        <dbReference type="UniProtKB" id="Q9H2J4"/>
    </source>
</evidence>
<evidence type="ECO:0000255" key="4"/>
<evidence type="ECO:0000256" key="5">
    <source>
        <dbReference type="SAM" id="MobiDB-lite"/>
    </source>
</evidence>
<evidence type="ECO:0000269" key="6">
    <source>
    </source>
</evidence>
<evidence type="ECO:0000305" key="7"/>
<evidence type="ECO:0000312" key="8">
    <source>
        <dbReference type="EMBL" id="AAG09198.1"/>
    </source>
</evidence>
<evidence type="ECO:0000312" key="9">
    <source>
        <dbReference type="EMBL" id="AAH64706.1"/>
    </source>
</evidence>
<reference evidence="7 8" key="1">
    <citation type="journal article" date="2004" name="J. Biol. Chem.">
        <title>VIAF, a conserved inhibitor of apoptosis (IAP)-interacting factor that modulates caspase activation.</title>
        <authorList>
            <person name="Wilkinson J.C."/>
            <person name="Richter B.W.M."/>
            <person name="Wilkinson A.S."/>
            <person name="Burstein E."/>
            <person name="Rumble J.M."/>
            <person name="Balliu B."/>
            <person name="Duckett C.S."/>
        </authorList>
    </citation>
    <scope>NUCLEOTIDE SEQUENCE [MRNA]</scope>
</reference>
<reference evidence="7 9" key="2">
    <citation type="submission" date="2003-12" db="EMBL/GenBank/DDBJ databases">
        <authorList>
            <consortium name="NIH - Zebrafish Gene Collection (ZGC) project"/>
        </authorList>
    </citation>
    <scope>NUCLEOTIDE SEQUENCE [LARGE SCALE MRNA]</scope>
    <source>
        <tissue evidence="9">Retina</tissue>
    </source>
</reference>
<reference key="3">
    <citation type="journal article" date="2015" name="Angiogenesis">
        <title>Hypoxia-induced expression of phosducin-like 3 regulates expression of VEGFR-2 and promotes angiogenesis.</title>
        <authorList>
            <person name="Srinivasan S."/>
            <person name="Chitalia V."/>
            <person name="Meyer R.D."/>
            <person name="Hartsough E."/>
            <person name="Mehta M."/>
            <person name="Harrold I."/>
            <person name="Anderson N."/>
            <person name="Feng H."/>
            <person name="Smith L.E."/>
            <person name="Jiang Y."/>
            <person name="Costello C.E."/>
            <person name="Rahimi N."/>
        </authorList>
    </citation>
    <scope>FUNCTION</scope>
    <scope>TISSUE SPECIFICITY</scope>
    <scope>DISRUPTION PHENOTYPE</scope>
</reference>
<proteinExistence type="evidence at transcript level"/>